<gene>
    <name evidence="1" type="primary">ispE</name>
    <name type="ordered locus">Adeh_0123</name>
</gene>
<comment type="function">
    <text evidence="1">Catalyzes the phosphorylation of the position 2 hydroxy group of 4-diphosphocytidyl-2C-methyl-D-erythritol.</text>
</comment>
<comment type="catalytic activity">
    <reaction evidence="1">
        <text>4-CDP-2-C-methyl-D-erythritol + ATP = 4-CDP-2-C-methyl-D-erythritol 2-phosphate + ADP + H(+)</text>
        <dbReference type="Rhea" id="RHEA:18437"/>
        <dbReference type="ChEBI" id="CHEBI:15378"/>
        <dbReference type="ChEBI" id="CHEBI:30616"/>
        <dbReference type="ChEBI" id="CHEBI:57823"/>
        <dbReference type="ChEBI" id="CHEBI:57919"/>
        <dbReference type="ChEBI" id="CHEBI:456216"/>
        <dbReference type="EC" id="2.7.1.148"/>
    </reaction>
</comment>
<comment type="pathway">
    <text evidence="1">Isoprenoid biosynthesis; isopentenyl diphosphate biosynthesis via DXP pathway; isopentenyl diphosphate from 1-deoxy-D-xylulose 5-phosphate: step 3/6.</text>
</comment>
<comment type="similarity">
    <text evidence="1">Belongs to the GHMP kinase family. IspE subfamily.</text>
</comment>
<sequence length="313" mass="32912">MRLVTLAPAKVNLVLRVGPVRADGYHDLRTLMVPLDLGDRVDVRVSARRGPVRCTVPGRPELHGPENLAARAAEAFRRRFGVDRAVSIRIEKRTPVTAGLGGGSSDAAAVLRCLARAFRVRDRAALAALALEIGSDVPFFLGPGPAWAAGRGERLSPADVPPLDLVLVYPADPSLAIRAGDAYRWLDEARAGGPQAPRRLGRPGRWRPSLLGNDLQAPCVARKPALQALLGLLVGAGATAAIMSGSGPTVFGVFPGRGAARGAALAIQGRAKGGAAGVQVLLARTVRRHPRVSPWRSPRSASSPSTRRSSRPT</sequence>
<dbReference type="EC" id="2.7.1.148" evidence="1"/>
<dbReference type="EMBL" id="CP000251">
    <property type="protein sequence ID" value="ABC79900.1"/>
    <property type="molecule type" value="Genomic_DNA"/>
</dbReference>
<dbReference type="RefSeq" id="WP_011419183.1">
    <property type="nucleotide sequence ID" value="NC_007760.1"/>
</dbReference>
<dbReference type="SMR" id="Q2IM67"/>
<dbReference type="STRING" id="290397.Adeh_0123"/>
<dbReference type="KEGG" id="ade:Adeh_0123"/>
<dbReference type="eggNOG" id="COG1947">
    <property type="taxonomic scope" value="Bacteria"/>
</dbReference>
<dbReference type="HOGENOM" id="CLU_053057_1_1_7"/>
<dbReference type="OrthoDB" id="9809438at2"/>
<dbReference type="UniPathway" id="UPA00056">
    <property type="reaction ID" value="UER00094"/>
</dbReference>
<dbReference type="Proteomes" id="UP000001935">
    <property type="component" value="Chromosome"/>
</dbReference>
<dbReference type="GO" id="GO:0050515">
    <property type="term" value="F:4-(cytidine 5'-diphospho)-2-C-methyl-D-erythritol kinase activity"/>
    <property type="evidence" value="ECO:0007669"/>
    <property type="project" value="UniProtKB-UniRule"/>
</dbReference>
<dbReference type="GO" id="GO:0005524">
    <property type="term" value="F:ATP binding"/>
    <property type="evidence" value="ECO:0007669"/>
    <property type="project" value="UniProtKB-UniRule"/>
</dbReference>
<dbReference type="GO" id="GO:0019288">
    <property type="term" value="P:isopentenyl diphosphate biosynthetic process, methylerythritol 4-phosphate pathway"/>
    <property type="evidence" value="ECO:0007669"/>
    <property type="project" value="UniProtKB-UniRule"/>
</dbReference>
<dbReference type="GO" id="GO:0016114">
    <property type="term" value="P:terpenoid biosynthetic process"/>
    <property type="evidence" value="ECO:0007669"/>
    <property type="project" value="InterPro"/>
</dbReference>
<dbReference type="Gene3D" id="3.30.230.10">
    <property type="match status" value="1"/>
</dbReference>
<dbReference type="Gene3D" id="3.30.70.890">
    <property type="entry name" value="GHMP kinase, C-terminal domain"/>
    <property type="match status" value="1"/>
</dbReference>
<dbReference type="HAMAP" id="MF_00061">
    <property type="entry name" value="IspE"/>
    <property type="match status" value="1"/>
</dbReference>
<dbReference type="InterPro" id="IPR013750">
    <property type="entry name" value="GHMP_kinase_C_dom"/>
</dbReference>
<dbReference type="InterPro" id="IPR036554">
    <property type="entry name" value="GHMP_kinase_C_sf"/>
</dbReference>
<dbReference type="InterPro" id="IPR006204">
    <property type="entry name" value="GHMP_kinase_N_dom"/>
</dbReference>
<dbReference type="InterPro" id="IPR004424">
    <property type="entry name" value="IspE"/>
</dbReference>
<dbReference type="InterPro" id="IPR020568">
    <property type="entry name" value="Ribosomal_Su5_D2-typ_SF"/>
</dbReference>
<dbReference type="InterPro" id="IPR014721">
    <property type="entry name" value="Ribsml_uS5_D2-typ_fold_subgr"/>
</dbReference>
<dbReference type="NCBIfam" id="TIGR00154">
    <property type="entry name" value="ispE"/>
    <property type="match status" value="1"/>
</dbReference>
<dbReference type="PANTHER" id="PTHR43527">
    <property type="entry name" value="4-DIPHOSPHOCYTIDYL-2-C-METHYL-D-ERYTHRITOL KINASE, CHLOROPLASTIC"/>
    <property type="match status" value="1"/>
</dbReference>
<dbReference type="PANTHER" id="PTHR43527:SF2">
    <property type="entry name" value="4-DIPHOSPHOCYTIDYL-2-C-METHYL-D-ERYTHRITOL KINASE, CHLOROPLASTIC"/>
    <property type="match status" value="1"/>
</dbReference>
<dbReference type="Pfam" id="PF08544">
    <property type="entry name" value="GHMP_kinases_C"/>
    <property type="match status" value="1"/>
</dbReference>
<dbReference type="Pfam" id="PF00288">
    <property type="entry name" value="GHMP_kinases_N"/>
    <property type="match status" value="1"/>
</dbReference>
<dbReference type="PIRSF" id="PIRSF010376">
    <property type="entry name" value="IspE"/>
    <property type="match status" value="1"/>
</dbReference>
<dbReference type="SUPFAM" id="SSF55060">
    <property type="entry name" value="GHMP Kinase, C-terminal domain"/>
    <property type="match status" value="1"/>
</dbReference>
<dbReference type="SUPFAM" id="SSF54211">
    <property type="entry name" value="Ribosomal protein S5 domain 2-like"/>
    <property type="match status" value="1"/>
</dbReference>
<organism>
    <name type="scientific">Anaeromyxobacter dehalogenans (strain 2CP-C)</name>
    <dbReference type="NCBI Taxonomy" id="290397"/>
    <lineage>
        <taxon>Bacteria</taxon>
        <taxon>Pseudomonadati</taxon>
        <taxon>Myxococcota</taxon>
        <taxon>Myxococcia</taxon>
        <taxon>Myxococcales</taxon>
        <taxon>Cystobacterineae</taxon>
        <taxon>Anaeromyxobacteraceae</taxon>
        <taxon>Anaeromyxobacter</taxon>
    </lineage>
</organism>
<name>ISPE_ANADE</name>
<protein>
    <recommendedName>
        <fullName evidence="1">4-diphosphocytidyl-2-C-methyl-D-erythritol kinase</fullName>
        <shortName evidence="1">CMK</shortName>
        <ecNumber evidence="1">2.7.1.148</ecNumber>
    </recommendedName>
    <alternativeName>
        <fullName evidence="1">4-(cytidine-5'-diphospho)-2-C-methyl-D-erythritol kinase</fullName>
    </alternativeName>
</protein>
<reference key="1">
    <citation type="submission" date="2006-01" db="EMBL/GenBank/DDBJ databases">
        <title>Complete sequence of Anaeromyxobacter dehalogenans 2CP-C.</title>
        <authorList>
            <person name="Copeland A."/>
            <person name="Lucas S."/>
            <person name="Lapidus A."/>
            <person name="Barry K."/>
            <person name="Detter J.C."/>
            <person name="Glavina T."/>
            <person name="Hammon N."/>
            <person name="Israni S."/>
            <person name="Pitluck S."/>
            <person name="Brettin T."/>
            <person name="Bruce D."/>
            <person name="Han C."/>
            <person name="Tapia R."/>
            <person name="Gilna P."/>
            <person name="Kiss H."/>
            <person name="Schmutz J."/>
            <person name="Larimer F."/>
            <person name="Land M."/>
            <person name="Kyrpides N."/>
            <person name="Anderson I."/>
            <person name="Sanford R.A."/>
            <person name="Ritalahti K.M."/>
            <person name="Thomas H.S."/>
            <person name="Kirby J.R."/>
            <person name="Zhulin I.B."/>
            <person name="Loeffler F.E."/>
            <person name="Richardson P."/>
        </authorList>
    </citation>
    <scope>NUCLEOTIDE SEQUENCE [LARGE SCALE GENOMIC DNA]</scope>
    <source>
        <strain>2CP-C</strain>
    </source>
</reference>
<feature type="chain" id="PRO_0000235059" description="4-diphosphocytidyl-2-C-methyl-D-erythritol kinase">
    <location>
        <begin position="1"/>
        <end position="313"/>
    </location>
</feature>
<feature type="region of interest" description="Disordered" evidence="2">
    <location>
        <begin position="289"/>
        <end position="313"/>
    </location>
</feature>
<feature type="compositionally biased region" description="Low complexity" evidence="2">
    <location>
        <begin position="292"/>
        <end position="307"/>
    </location>
</feature>
<feature type="active site" evidence="1">
    <location>
        <position position="10"/>
    </location>
</feature>
<feature type="active site" evidence="1">
    <location>
        <position position="136"/>
    </location>
</feature>
<feature type="binding site" evidence="1">
    <location>
        <begin position="95"/>
        <end position="105"/>
    </location>
    <ligand>
        <name>ATP</name>
        <dbReference type="ChEBI" id="CHEBI:30616"/>
    </ligand>
</feature>
<evidence type="ECO:0000255" key="1">
    <source>
        <dbReference type="HAMAP-Rule" id="MF_00061"/>
    </source>
</evidence>
<evidence type="ECO:0000256" key="2">
    <source>
        <dbReference type="SAM" id="MobiDB-lite"/>
    </source>
</evidence>
<proteinExistence type="inferred from homology"/>
<keyword id="KW-0067">ATP-binding</keyword>
<keyword id="KW-0414">Isoprene biosynthesis</keyword>
<keyword id="KW-0418">Kinase</keyword>
<keyword id="KW-0547">Nucleotide-binding</keyword>
<keyword id="KW-1185">Reference proteome</keyword>
<keyword id="KW-0808">Transferase</keyword>
<accession>Q2IM67</accession>